<proteinExistence type="evidence at protein level"/>
<feature type="chain" id="PRO_0000198753" description="Myosin regulatory light chain, striated muscle, 25 kDa isoform">
    <location>
        <begin position="1"/>
        <end position="195"/>
    </location>
</feature>
<feature type="domain" description="EF-hand 1" evidence="1">
    <location>
        <begin position="55"/>
        <end position="90"/>
    </location>
</feature>
<feature type="domain" description="EF-hand 2" evidence="1">
    <location>
        <begin position="124"/>
        <end position="159"/>
    </location>
</feature>
<feature type="region of interest" description="Disordered" evidence="2">
    <location>
        <begin position="1"/>
        <end position="39"/>
    </location>
</feature>
<feature type="compositionally biased region" description="Basic and acidic residues" evidence="2">
    <location>
        <begin position="1"/>
        <end position="17"/>
    </location>
</feature>
<feature type="compositionally biased region" description="Low complexity" evidence="2">
    <location>
        <begin position="20"/>
        <end position="39"/>
    </location>
</feature>
<feature type="binding site" evidence="1">
    <location>
        <position position="68"/>
    </location>
    <ligand>
        <name>Ca(2+)</name>
        <dbReference type="ChEBI" id="CHEBI:29108"/>
    </ligand>
</feature>
<feature type="binding site" evidence="1">
    <location>
        <position position="70"/>
    </location>
    <ligand>
        <name>Ca(2+)</name>
        <dbReference type="ChEBI" id="CHEBI:29108"/>
    </ligand>
</feature>
<feature type="binding site" evidence="1">
    <location>
        <position position="72"/>
    </location>
    <ligand>
        <name>Ca(2+)</name>
        <dbReference type="ChEBI" id="CHEBI:29108"/>
    </ligand>
</feature>
<feature type="binding site" evidence="1">
    <location>
        <position position="79"/>
    </location>
    <ligand>
        <name>Ca(2+)</name>
        <dbReference type="ChEBI" id="CHEBI:29108"/>
    </ligand>
</feature>
<feature type="sequence variant" description="In 20% of the molecules.">
    <original>T</original>
    <variation>A</variation>
    <location>
        <position position="65"/>
    </location>
</feature>
<feature type="sequence variant" description="In 20% of the molecules.">
    <original>D</original>
    <variation>N</variation>
    <location>
        <position position="70"/>
    </location>
</feature>
<feature type="sequence variant" description="In 20% of the molecules.">
    <original>GPD</original>
    <variation>DES</variation>
    <location>
        <begin position="76"/>
        <end position="78"/>
    </location>
</feature>
<feature type="sequence variant" description="In 20% of the molecules.">
    <original>GN</original>
    <variation>AA</variation>
    <location>
        <begin position="81"/>
        <end position="82"/>
    </location>
</feature>
<feature type="sequence variant" description="In 20% of the molecules.">
    <original>F</original>
    <variation>Y</variation>
    <location>
        <position position="84"/>
    </location>
</feature>
<feature type="sequence variant" description="In 20% of the molecules.">
    <original>GT</original>
    <variation>SS</variation>
    <location>
        <begin position="127"/>
        <end position="128"/>
    </location>
</feature>
<feature type="sequence variant" description="In 20% of the molecules.">
    <original>L</original>
    <variation>V</variation>
    <location>
        <position position="141"/>
    </location>
</feature>
<feature type="sequence variant" description="In 20% of the molecules.">
    <original>V</original>
    <variation>L</variation>
    <location>
        <position position="168"/>
    </location>
</feature>
<protein>
    <recommendedName>
        <fullName>Myosin regulatory light chain, striated muscle, 25 kDa isoform</fullName>
        <shortName>LC25</shortName>
    </recommendedName>
</protein>
<sequence>AKDKEKKEKKDKKKDDAPAEEAPAAAAAPAEEAAPTPSAAPIHKVGNVFALFKQNQIQEFKEAFTMIDQDRDGIIGPDDLGNIFQQIGREVDPKVVKEMLAESAEKLNFTHFLTLFGEKLHGTDTEGTLRDAFALFDEDKLGYLLEEYVKDLLTNVGDQYNKDEIKQVWKEAPIEGGKFDYVKFVRLIKRGKEEE</sequence>
<dbReference type="PIR" id="S28845">
    <property type="entry name" value="S28845"/>
</dbReference>
<dbReference type="SMR" id="P80164"/>
<dbReference type="GO" id="GO:0016459">
    <property type="term" value="C:myosin complex"/>
    <property type="evidence" value="ECO:0007669"/>
    <property type="project" value="UniProtKB-KW"/>
</dbReference>
<dbReference type="GO" id="GO:0005509">
    <property type="term" value="F:calcium ion binding"/>
    <property type="evidence" value="ECO:0007669"/>
    <property type="project" value="InterPro"/>
</dbReference>
<dbReference type="FunFam" id="1.10.238.10:FF:000007">
    <property type="entry name" value="Putative myosin regulatory light chain sqh"/>
    <property type="match status" value="1"/>
</dbReference>
<dbReference type="Gene3D" id="1.10.238.10">
    <property type="entry name" value="EF-hand"/>
    <property type="match status" value="2"/>
</dbReference>
<dbReference type="InterPro" id="IPR011992">
    <property type="entry name" value="EF-hand-dom_pair"/>
</dbReference>
<dbReference type="InterPro" id="IPR018247">
    <property type="entry name" value="EF_Hand_1_Ca_BS"/>
</dbReference>
<dbReference type="InterPro" id="IPR002048">
    <property type="entry name" value="EF_hand_dom"/>
</dbReference>
<dbReference type="InterPro" id="IPR050403">
    <property type="entry name" value="Myosin_RLC"/>
</dbReference>
<dbReference type="PANTHER" id="PTHR23049">
    <property type="entry name" value="MYOSIN REGULATORY LIGHT CHAIN 2"/>
    <property type="match status" value="1"/>
</dbReference>
<dbReference type="Pfam" id="PF13405">
    <property type="entry name" value="EF-hand_6"/>
    <property type="match status" value="1"/>
</dbReference>
<dbReference type="SMART" id="SM00054">
    <property type="entry name" value="EFh"/>
    <property type="match status" value="2"/>
</dbReference>
<dbReference type="SUPFAM" id="SSF47473">
    <property type="entry name" value="EF-hand"/>
    <property type="match status" value="1"/>
</dbReference>
<dbReference type="PROSITE" id="PS00018">
    <property type="entry name" value="EF_HAND_1"/>
    <property type="match status" value="1"/>
</dbReference>
<dbReference type="PROSITE" id="PS50222">
    <property type="entry name" value="EF_HAND_2"/>
    <property type="match status" value="2"/>
</dbReference>
<evidence type="ECO:0000255" key="1">
    <source>
        <dbReference type="PROSITE-ProRule" id="PRU00448"/>
    </source>
</evidence>
<evidence type="ECO:0000256" key="2">
    <source>
        <dbReference type="SAM" id="MobiDB-lite"/>
    </source>
</evidence>
<comment type="function">
    <text>Plays an important role in regulation of muscle cell contractile activity.</text>
</comment>
<comment type="subunit">
    <text>Myosin is a hexamer of 2 heavy chains and 4 light chains.</text>
</comment>
<comment type="miscellaneous">
    <text>This chain binds calcium.</text>
</comment>
<accession>P80164</accession>
<name>MLR_LUMTE</name>
<keyword id="KW-0106">Calcium</keyword>
<keyword id="KW-0903">Direct protein sequencing</keyword>
<keyword id="KW-0479">Metal-binding</keyword>
<keyword id="KW-0505">Motor protein</keyword>
<keyword id="KW-0514">Muscle protein</keyword>
<keyword id="KW-0518">Myosin</keyword>
<keyword id="KW-0677">Repeat</keyword>
<organism>
    <name type="scientific">Lumbricus terrestris</name>
    <name type="common">Common earthworm</name>
    <dbReference type="NCBI Taxonomy" id="6398"/>
    <lineage>
        <taxon>Eukaryota</taxon>
        <taxon>Metazoa</taxon>
        <taxon>Spiralia</taxon>
        <taxon>Lophotrochozoa</taxon>
        <taxon>Annelida</taxon>
        <taxon>Clitellata</taxon>
        <taxon>Oligochaeta</taxon>
        <taxon>Crassiclitellata</taxon>
        <taxon>Lumbricina</taxon>
        <taxon>Lumbricidae</taxon>
        <taxon>Lumbricinae</taxon>
        <taxon>Lumbricus</taxon>
    </lineage>
</organism>
<reference key="1">
    <citation type="journal article" date="1993" name="Eur. J. Biochem.">
        <title>Complete amino acid sequence of the regulatory light chain of obliquely striated muscle myosin from earthworm, Lumbricus terrestris.</title>
        <authorList>
            <person name="Serwe M."/>
            <person name="Meyer H.E."/>
            <person name="Craig A.G."/>
            <person name="Carlhoff D."/>
            <person name="D'Haese J."/>
        </authorList>
    </citation>
    <scope>PROTEIN SEQUENCE</scope>
</reference>